<gene>
    <name evidence="1" type="primary">rbcL</name>
</gene>
<accession>P43222</accession>
<name>RBL_ACRAU</name>
<geneLocation type="chloroplast"/>
<reference key="1">
    <citation type="journal article" date="1994" name="Proc. Natl. Acad. Sci. U.S.A.">
        <title>rbcL gene sequences provide evidence for the evolutionary lineages of leptosporangiate ferns.</title>
        <authorList>
            <person name="Hasebe M."/>
            <person name="Omori T."/>
            <person name="Nakazawa M."/>
            <person name="Sano T."/>
            <person name="Kato M."/>
            <person name="Iwatsuki K."/>
        </authorList>
    </citation>
    <scope>NUCLEOTIDE SEQUENCE [GENOMIC DNA]</scope>
    <source>
        <tissue>Leaf</tissue>
    </source>
</reference>
<sequence length="417" mass="46284">DLTYYTPEYQTKDTDILAAFRMTPQPGVPAEEAGAAVAAESSTGTWTTVWTDGLTTLDRYKGRCYDIEPVPGEENQYIAYVAYPLDLFEEGSVTNMFTSIVGNVFGFKALRALRLEDLRIPPAYPKTFIGPPHGIQVERDKLNKYGRPLLGCTIKPKLGLSAKNYGRAVYECLRGGLDFTKDDENVNSQPFMRWRDRFLFVAEALFKALAETGEIKGHYLNATAGTSEEMMKRARFARELGAPIVMHDYLTGGFTANTSLAFYCRDNGLLLHIHRAMHAVIDRQRNHGMHFRVLAKALRMSGGDHIHAGTVVGKLEGEREVTLGFVDLLRDDYIEKDRSRGIYFTQDWVSMPGVIPVASGGIHVWHMPALTEIFGDDAVLQFCGGTLGHPWGNAPGAVANRVALEACVQARNEGRDL</sequence>
<evidence type="ECO:0000255" key="1">
    <source>
        <dbReference type="HAMAP-Rule" id="MF_01338"/>
    </source>
</evidence>
<keyword id="KW-0113">Calvin cycle</keyword>
<keyword id="KW-0120">Carbon dioxide fixation</keyword>
<keyword id="KW-0150">Chloroplast</keyword>
<keyword id="KW-0456">Lyase</keyword>
<keyword id="KW-0460">Magnesium</keyword>
<keyword id="KW-0479">Metal-binding</keyword>
<keyword id="KW-0503">Monooxygenase</keyword>
<keyword id="KW-0560">Oxidoreductase</keyword>
<keyword id="KW-0601">Photorespiration</keyword>
<keyword id="KW-0602">Photosynthesis</keyword>
<keyword id="KW-0934">Plastid</keyword>
<proteinExistence type="inferred from homology"/>
<feature type="chain" id="PRO_0000062338" description="Ribulose bisphosphate carboxylase large chain">
    <location>
        <begin position="1" status="less than"/>
        <end position="417" status="greater than"/>
    </location>
</feature>
<feature type="active site" description="Proton acceptor" evidence="1">
    <location>
        <position position="155"/>
    </location>
</feature>
<feature type="active site" description="Proton acceptor" evidence="1">
    <location>
        <position position="274"/>
    </location>
</feature>
<feature type="binding site" description="in homodimeric partner" evidence="1">
    <location>
        <position position="103"/>
    </location>
    <ligand>
        <name>substrate</name>
    </ligand>
</feature>
<feature type="binding site" evidence="1">
    <location>
        <position position="153"/>
    </location>
    <ligand>
        <name>substrate</name>
    </ligand>
</feature>
<feature type="binding site" evidence="1">
    <location>
        <position position="157"/>
    </location>
    <ligand>
        <name>substrate</name>
    </ligand>
</feature>
<feature type="binding site" description="via carbamate group" evidence="1">
    <location>
        <position position="181"/>
    </location>
    <ligand>
        <name>Mg(2+)</name>
        <dbReference type="ChEBI" id="CHEBI:18420"/>
    </ligand>
</feature>
<feature type="binding site" evidence="1">
    <location>
        <position position="183"/>
    </location>
    <ligand>
        <name>Mg(2+)</name>
        <dbReference type="ChEBI" id="CHEBI:18420"/>
    </ligand>
</feature>
<feature type="binding site" evidence="1">
    <location>
        <position position="184"/>
    </location>
    <ligand>
        <name>Mg(2+)</name>
        <dbReference type="ChEBI" id="CHEBI:18420"/>
    </ligand>
</feature>
<feature type="binding site" evidence="1">
    <location>
        <position position="275"/>
    </location>
    <ligand>
        <name>substrate</name>
    </ligand>
</feature>
<feature type="binding site" evidence="1">
    <location>
        <position position="307"/>
    </location>
    <ligand>
        <name>substrate</name>
    </ligand>
</feature>
<feature type="binding site" evidence="1">
    <location>
        <position position="359"/>
    </location>
    <ligand>
        <name>substrate</name>
    </ligand>
</feature>
<feature type="site" description="Transition state stabilizer" evidence="1">
    <location>
        <position position="314"/>
    </location>
</feature>
<feature type="modified residue" description="N6-carboxylysine" evidence="1">
    <location>
        <position position="181"/>
    </location>
</feature>
<feature type="non-terminal residue">
    <location>
        <position position="1"/>
    </location>
</feature>
<feature type="non-terminal residue">
    <location>
        <position position="417"/>
    </location>
</feature>
<protein>
    <recommendedName>
        <fullName evidence="1">Ribulose bisphosphate carboxylase large chain</fullName>
        <shortName evidence="1">RuBisCO large subunit</shortName>
        <ecNumber evidence="1">4.1.1.39</ecNumber>
    </recommendedName>
</protein>
<organism>
    <name type="scientific">Acrostichum aureum</name>
    <name type="common">Golden leather fern</name>
    <dbReference type="NCBI Taxonomy" id="29594"/>
    <lineage>
        <taxon>Eukaryota</taxon>
        <taxon>Viridiplantae</taxon>
        <taxon>Streptophyta</taxon>
        <taxon>Embryophyta</taxon>
        <taxon>Tracheophyta</taxon>
        <taxon>Polypodiopsida</taxon>
        <taxon>Polypodiidae</taxon>
        <taxon>Polypodiales</taxon>
        <taxon>Pteridineae</taxon>
        <taxon>Pteridaceae</taxon>
        <taxon>Parkerioideae</taxon>
        <taxon>Acrostichum</taxon>
    </lineage>
</organism>
<dbReference type="EC" id="4.1.1.39" evidence="1"/>
<dbReference type="EMBL" id="U05601">
    <property type="protein sequence ID" value="AAA19885.1"/>
    <property type="molecule type" value="Genomic_DNA"/>
</dbReference>
<dbReference type="SMR" id="P43222"/>
<dbReference type="GO" id="GO:0009507">
    <property type="term" value="C:chloroplast"/>
    <property type="evidence" value="ECO:0007669"/>
    <property type="project" value="UniProtKB-SubCell"/>
</dbReference>
<dbReference type="GO" id="GO:0000287">
    <property type="term" value="F:magnesium ion binding"/>
    <property type="evidence" value="ECO:0007669"/>
    <property type="project" value="InterPro"/>
</dbReference>
<dbReference type="GO" id="GO:0004497">
    <property type="term" value="F:monooxygenase activity"/>
    <property type="evidence" value="ECO:0007669"/>
    <property type="project" value="UniProtKB-KW"/>
</dbReference>
<dbReference type="GO" id="GO:0016984">
    <property type="term" value="F:ribulose-bisphosphate carboxylase activity"/>
    <property type="evidence" value="ECO:0007669"/>
    <property type="project" value="UniProtKB-EC"/>
</dbReference>
<dbReference type="GO" id="GO:0009853">
    <property type="term" value="P:photorespiration"/>
    <property type="evidence" value="ECO:0007669"/>
    <property type="project" value="UniProtKB-KW"/>
</dbReference>
<dbReference type="GO" id="GO:0019253">
    <property type="term" value="P:reductive pentose-phosphate cycle"/>
    <property type="evidence" value="ECO:0007669"/>
    <property type="project" value="UniProtKB-KW"/>
</dbReference>
<dbReference type="Gene3D" id="3.20.20.110">
    <property type="entry name" value="Ribulose bisphosphate carboxylase, large subunit, C-terminal domain"/>
    <property type="match status" value="1"/>
</dbReference>
<dbReference type="Gene3D" id="3.30.70.150">
    <property type="entry name" value="RuBisCO large subunit, N-terminal domain"/>
    <property type="match status" value="1"/>
</dbReference>
<dbReference type="HAMAP" id="MF_01338">
    <property type="entry name" value="RuBisCO_L_type1"/>
    <property type="match status" value="1"/>
</dbReference>
<dbReference type="InterPro" id="IPR033966">
    <property type="entry name" value="RuBisCO"/>
</dbReference>
<dbReference type="InterPro" id="IPR020878">
    <property type="entry name" value="RuBisCo_large_chain_AS"/>
</dbReference>
<dbReference type="InterPro" id="IPR000685">
    <property type="entry name" value="RuBisCO_lsu_C"/>
</dbReference>
<dbReference type="InterPro" id="IPR036376">
    <property type="entry name" value="RuBisCO_lsu_C_sf"/>
</dbReference>
<dbReference type="InterPro" id="IPR017443">
    <property type="entry name" value="RuBisCO_lsu_fd_N"/>
</dbReference>
<dbReference type="InterPro" id="IPR036422">
    <property type="entry name" value="RuBisCO_lsu_N_sf"/>
</dbReference>
<dbReference type="InterPro" id="IPR020888">
    <property type="entry name" value="RuBisCO_lsuI"/>
</dbReference>
<dbReference type="NCBIfam" id="NF003252">
    <property type="entry name" value="PRK04208.1"/>
    <property type="match status" value="1"/>
</dbReference>
<dbReference type="PANTHER" id="PTHR42704">
    <property type="entry name" value="RIBULOSE BISPHOSPHATE CARBOXYLASE"/>
    <property type="match status" value="1"/>
</dbReference>
<dbReference type="PANTHER" id="PTHR42704:SF17">
    <property type="entry name" value="RIBULOSE BISPHOSPHATE CARBOXYLASE LARGE CHAIN"/>
    <property type="match status" value="1"/>
</dbReference>
<dbReference type="Pfam" id="PF00016">
    <property type="entry name" value="RuBisCO_large"/>
    <property type="match status" value="1"/>
</dbReference>
<dbReference type="Pfam" id="PF02788">
    <property type="entry name" value="RuBisCO_large_N"/>
    <property type="match status" value="1"/>
</dbReference>
<dbReference type="SFLD" id="SFLDS00014">
    <property type="entry name" value="RuBisCO"/>
    <property type="match status" value="1"/>
</dbReference>
<dbReference type="SFLD" id="SFLDG00301">
    <property type="entry name" value="RuBisCO-like_proteins"/>
    <property type="match status" value="1"/>
</dbReference>
<dbReference type="SUPFAM" id="SSF51649">
    <property type="entry name" value="RuBisCo, C-terminal domain"/>
    <property type="match status" value="1"/>
</dbReference>
<dbReference type="SUPFAM" id="SSF54966">
    <property type="entry name" value="RuBisCO, large subunit, small (N-terminal) domain"/>
    <property type="match status" value="1"/>
</dbReference>
<dbReference type="PROSITE" id="PS00157">
    <property type="entry name" value="RUBISCO_LARGE"/>
    <property type="match status" value="1"/>
</dbReference>
<comment type="function">
    <text evidence="1">RuBisCO catalyzes two reactions: the carboxylation of D-ribulose 1,5-bisphosphate, the primary event in carbon dioxide fixation, as well as the oxidative fragmentation of the pentose substrate in the photorespiration process. Both reactions occur simultaneously and in competition at the same active site.</text>
</comment>
<comment type="catalytic activity">
    <reaction evidence="1">
        <text>2 (2R)-3-phosphoglycerate + 2 H(+) = D-ribulose 1,5-bisphosphate + CO2 + H2O</text>
        <dbReference type="Rhea" id="RHEA:23124"/>
        <dbReference type="ChEBI" id="CHEBI:15377"/>
        <dbReference type="ChEBI" id="CHEBI:15378"/>
        <dbReference type="ChEBI" id="CHEBI:16526"/>
        <dbReference type="ChEBI" id="CHEBI:57870"/>
        <dbReference type="ChEBI" id="CHEBI:58272"/>
        <dbReference type="EC" id="4.1.1.39"/>
    </reaction>
</comment>
<comment type="catalytic activity">
    <reaction evidence="1">
        <text>D-ribulose 1,5-bisphosphate + O2 = 2-phosphoglycolate + (2R)-3-phosphoglycerate + 2 H(+)</text>
        <dbReference type="Rhea" id="RHEA:36631"/>
        <dbReference type="ChEBI" id="CHEBI:15378"/>
        <dbReference type="ChEBI" id="CHEBI:15379"/>
        <dbReference type="ChEBI" id="CHEBI:57870"/>
        <dbReference type="ChEBI" id="CHEBI:58033"/>
        <dbReference type="ChEBI" id="CHEBI:58272"/>
    </reaction>
</comment>
<comment type="cofactor">
    <cofactor evidence="1">
        <name>Mg(2+)</name>
        <dbReference type="ChEBI" id="CHEBI:18420"/>
    </cofactor>
    <text evidence="1">Binds 1 Mg(2+) ion per subunit.</text>
</comment>
<comment type="subunit">
    <text evidence="1">Heterohexadecamer of 8 large chains and 8 small chains.</text>
</comment>
<comment type="subcellular location">
    <subcellularLocation>
        <location>Plastid</location>
        <location>Chloroplast</location>
    </subcellularLocation>
</comment>
<comment type="miscellaneous">
    <text evidence="1">The basic functional RuBisCO is composed of a large chain homodimer in a 'head-to-tail' conformation. In form I RuBisCO this homodimer is arranged in a barrel-like tetramer with the small subunits forming a tetrameric 'cap' on each end of the 'barrel'.</text>
</comment>
<comment type="similarity">
    <text evidence="1">Belongs to the RuBisCO large chain family. Type I subfamily.</text>
</comment>